<keyword id="KW-0002">3D-structure</keyword>
<keyword id="KW-1185">Reference proteome</keyword>
<keyword id="KW-0687">Ribonucleoprotein</keyword>
<keyword id="KW-0689">Ribosomal protein</keyword>
<sequence>MSRVRTKTVKKASRVLIEKYYTRMTNDFHNNKRVCDEVAIIGSKPLRNKIAGYITHLMRRIERGPVRGISIKLQEEERERRDNYMPEISTVDPSQLTSIKVDTDTSDMLKAAGFNLPNVTVEDQGKNKGK</sequence>
<organism>
    <name type="scientific">Caenorhabditis elegans</name>
    <dbReference type="NCBI Taxonomy" id="6239"/>
    <lineage>
        <taxon>Eukaryota</taxon>
        <taxon>Metazoa</taxon>
        <taxon>Ecdysozoa</taxon>
        <taxon>Nematoda</taxon>
        <taxon>Chromadorea</taxon>
        <taxon>Rhabditida</taxon>
        <taxon>Rhabditina</taxon>
        <taxon>Rhabditomorpha</taxon>
        <taxon>Rhabditoidea</taxon>
        <taxon>Rhabditidae</taxon>
        <taxon>Peloderinae</taxon>
        <taxon>Caenorhabditis</taxon>
    </lineage>
</organism>
<name>RS17_CAEEL</name>
<dbReference type="EMBL" id="FO080899">
    <property type="protein sequence ID" value="CCD67616.1"/>
    <property type="molecule type" value="Genomic_DNA"/>
</dbReference>
<dbReference type="RefSeq" id="NP_491795.1">
    <property type="nucleotide sequence ID" value="NM_059394.9"/>
</dbReference>
<dbReference type="PDB" id="9BH5">
    <property type="method" value="EM"/>
    <property type="resolution" value="2.63 A"/>
    <property type="chains" value="AR=1-130"/>
</dbReference>
<dbReference type="PDB" id="9CAI">
    <property type="method" value="EM"/>
    <property type="resolution" value="2.59 A"/>
    <property type="chains" value="AR=1-130"/>
</dbReference>
<dbReference type="PDBsum" id="9BH5"/>
<dbReference type="PDBsum" id="9CAI"/>
<dbReference type="EMDB" id="EMD-44533"/>
<dbReference type="EMDB" id="EMD-45392"/>
<dbReference type="SMR" id="O01692"/>
<dbReference type="BioGRID" id="37766">
    <property type="interactions" value="99"/>
</dbReference>
<dbReference type="FunCoup" id="O01692">
    <property type="interactions" value="2079"/>
</dbReference>
<dbReference type="STRING" id="6239.T08B2.10.2"/>
<dbReference type="PaxDb" id="6239-T08B2.10"/>
<dbReference type="PeptideAtlas" id="O01692"/>
<dbReference type="EnsemblMetazoa" id="T08B2.10.1">
    <property type="protein sequence ID" value="T08B2.10.1"/>
    <property type="gene ID" value="WBGene00004486"/>
</dbReference>
<dbReference type="GeneID" id="172313"/>
<dbReference type="KEGG" id="cel:CELE_T08B2.10"/>
<dbReference type="UCSC" id="T08B2.10.2">
    <property type="organism name" value="c. elegans"/>
</dbReference>
<dbReference type="AGR" id="WB:WBGene00004486"/>
<dbReference type="CTD" id="172313"/>
<dbReference type="WormBase" id="T08B2.10">
    <property type="protein sequence ID" value="CE26948"/>
    <property type="gene ID" value="WBGene00004486"/>
    <property type="gene designation" value="rps-17"/>
</dbReference>
<dbReference type="eggNOG" id="KOG0187">
    <property type="taxonomic scope" value="Eukaryota"/>
</dbReference>
<dbReference type="GeneTree" id="ENSGT00390000006548"/>
<dbReference type="HOGENOM" id="CLU_112958_0_1_1"/>
<dbReference type="InParanoid" id="O01692"/>
<dbReference type="OMA" id="FTTHLMA"/>
<dbReference type="OrthoDB" id="1727351at2759"/>
<dbReference type="PhylomeDB" id="O01692"/>
<dbReference type="Reactome" id="R-CEL-156827">
    <property type="pathway name" value="L13a-mediated translational silencing of Ceruloplasmin expression"/>
</dbReference>
<dbReference type="Reactome" id="R-CEL-1799339">
    <property type="pathway name" value="SRP-dependent cotranslational protein targeting to membrane"/>
</dbReference>
<dbReference type="Reactome" id="R-CEL-72649">
    <property type="pathway name" value="Translation initiation complex formation"/>
</dbReference>
<dbReference type="Reactome" id="R-CEL-72689">
    <property type="pathway name" value="Formation of a pool of free 40S subunits"/>
</dbReference>
<dbReference type="Reactome" id="R-CEL-72695">
    <property type="pathway name" value="Formation of the ternary complex, and subsequently, the 43S complex"/>
</dbReference>
<dbReference type="Reactome" id="R-CEL-72702">
    <property type="pathway name" value="Ribosomal scanning and start codon recognition"/>
</dbReference>
<dbReference type="Reactome" id="R-CEL-72706">
    <property type="pathway name" value="GTP hydrolysis and joining of the 60S ribosomal subunit"/>
</dbReference>
<dbReference type="Reactome" id="R-CEL-975956">
    <property type="pathway name" value="Nonsense Mediated Decay (NMD) independent of the Exon Junction Complex (EJC)"/>
</dbReference>
<dbReference type="Reactome" id="R-CEL-975957">
    <property type="pathway name" value="Nonsense Mediated Decay (NMD) enhanced by the Exon Junction Complex (EJC)"/>
</dbReference>
<dbReference type="PRO" id="PR:O01692"/>
<dbReference type="Proteomes" id="UP000001940">
    <property type="component" value="Chromosome I"/>
</dbReference>
<dbReference type="Bgee" id="WBGene00004486">
    <property type="expression patterns" value="Expressed in germ line (C elegans) and 4 other cell types or tissues"/>
</dbReference>
<dbReference type="GO" id="GO:0005829">
    <property type="term" value="C:cytosol"/>
    <property type="evidence" value="ECO:0007669"/>
    <property type="project" value="UniProtKB-ARBA"/>
</dbReference>
<dbReference type="GO" id="GO:1990904">
    <property type="term" value="C:ribonucleoprotein complex"/>
    <property type="evidence" value="ECO:0007669"/>
    <property type="project" value="UniProtKB-KW"/>
</dbReference>
<dbReference type="GO" id="GO:0005840">
    <property type="term" value="C:ribosome"/>
    <property type="evidence" value="ECO:0007669"/>
    <property type="project" value="UniProtKB-KW"/>
</dbReference>
<dbReference type="GO" id="GO:0003735">
    <property type="term" value="F:structural constituent of ribosome"/>
    <property type="evidence" value="ECO:0007669"/>
    <property type="project" value="InterPro"/>
</dbReference>
<dbReference type="GO" id="GO:0006412">
    <property type="term" value="P:translation"/>
    <property type="evidence" value="ECO:0007669"/>
    <property type="project" value="InterPro"/>
</dbReference>
<dbReference type="FunFam" id="1.10.60.20:FF:000001">
    <property type="entry name" value="40S ribosomal protein S17"/>
    <property type="match status" value="1"/>
</dbReference>
<dbReference type="Gene3D" id="1.10.60.20">
    <property type="entry name" value="Ribosomal protein S17e-like"/>
    <property type="match status" value="1"/>
</dbReference>
<dbReference type="HAMAP" id="MF_00511">
    <property type="entry name" value="Ribosomal_eS17"/>
    <property type="match status" value="1"/>
</dbReference>
<dbReference type="InterPro" id="IPR001210">
    <property type="entry name" value="Ribosomal_eS17"/>
</dbReference>
<dbReference type="InterPro" id="IPR018273">
    <property type="entry name" value="Ribosomal_eS17_CS"/>
</dbReference>
<dbReference type="InterPro" id="IPR036401">
    <property type="entry name" value="Ribosomal_eS17_sf"/>
</dbReference>
<dbReference type="PANTHER" id="PTHR10732">
    <property type="entry name" value="40S RIBOSOMAL PROTEIN S17"/>
    <property type="match status" value="1"/>
</dbReference>
<dbReference type="PANTHER" id="PTHR10732:SF0">
    <property type="entry name" value="40S RIBOSOMAL PROTEIN S17"/>
    <property type="match status" value="1"/>
</dbReference>
<dbReference type="Pfam" id="PF00833">
    <property type="entry name" value="Ribosomal_S17e"/>
    <property type="match status" value="1"/>
</dbReference>
<dbReference type="SUPFAM" id="SSF116820">
    <property type="entry name" value="Rps17e-like"/>
    <property type="match status" value="1"/>
</dbReference>
<dbReference type="PROSITE" id="PS00712">
    <property type="entry name" value="RIBOSOMAL_S17E"/>
    <property type="match status" value="1"/>
</dbReference>
<evidence type="ECO:0000256" key="1">
    <source>
        <dbReference type="SAM" id="MobiDB-lite"/>
    </source>
</evidence>
<evidence type="ECO:0000305" key="2"/>
<accession>O01692</accession>
<reference key="1">
    <citation type="journal article" date="1998" name="Science">
        <title>Genome sequence of the nematode C. elegans: a platform for investigating biology.</title>
        <authorList>
            <consortium name="The C. elegans sequencing consortium"/>
        </authorList>
    </citation>
    <scope>NUCLEOTIDE SEQUENCE [LARGE SCALE GENOMIC DNA]</scope>
    <source>
        <strain>Bristol N2</strain>
    </source>
</reference>
<protein>
    <recommendedName>
        <fullName evidence="2">Small ribosomal subunit protein eS17</fullName>
    </recommendedName>
    <alternativeName>
        <fullName>40S ribosomal protein S17</fullName>
    </alternativeName>
</protein>
<gene>
    <name type="primary">rps-17</name>
    <name type="ORF">T08B2.10</name>
</gene>
<comment type="similarity">
    <text evidence="2">Belongs to the eukaryotic ribosomal protein eS17 family.</text>
</comment>
<feature type="chain" id="PRO_0000141535" description="Small ribosomal subunit protein eS17">
    <location>
        <begin position="1"/>
        <end position="130"/>
    </location>
</feature>
<feature type="region of interest" description="Disordered" evidence="1">
    <location>
        <begin position="74"/>
        <end position="97"/>
    </location>
</feature>
<feature type="compositionally biased region" description="Basic and acidic residues" evidence="1">
    <location>
        <begin position="74"/>
        <end position="84"/>
    </location>
</feature>
<proteinExistence type="evidence at protein level"/>